<reference key="1">
    <citation type="journal article" date="2009" name="PLoS Genet.">
        <title>Organised genome dynamics in the Escherichia coli species results in highly diverse adaptive paths.</title>
        <authorList>
            <person name="Touchon M."/>
            <person name="Hoede C."/>
            <person name="Tenaillon O."/>
            <person name="Barbe V."/>
            <person name="Baeriswyl S."/>
            <person name="Bidet P."/>
            <person name="Bingen E."/>
            <person name="Bonacorsi S."/>
            <person name="Bouchier C."/>
            <person name="Bouvet O."/>
            <person name="Calteau A."/>
            <person name="Chiapello H."/>
            <person name="Clermont O."/>
            <person name="Cruveiller S."/>
            <person name="Danchin A."/>
            <person name="Diard M."/>
            <person name="Dossat C."/>
            <person name="Karoui M.E."/>
            <person name="Frapy E."/>
            <person name="Garry L."/>
            <person name="Ghigo J.M."/>
            <person name="Gilles A.M."/>
            <person name="Johnson J."/>
            <person name="Le Bouguenec C."/>
            <person name="Lescat M."/>
            <person name="Mangenot S."/>
            <person name="Martinez-Jehanne V."/>
            <person name="Matic I."/>
            <person name="Nassif X."/>
            <person name="Oztas S."/>
            <person name="Petit M.A."/>
            <person name="Pichon C."/>
            <person name="Rouy Z."/>
            <person name="Ruf C.S."/>
            <person name="Schneider D."/>
            <person name="Tourret J."/>
            <person name="Vacherie B."/>
            <person name="Vallenet D."/>
            <person name="Medigue C."/>
            <person name="Rocha E.P.C."/>
            <person name="Denamur E."/>
        </authorList>
    </citation>
    <scope>NUCLEOTIDE SEQUENCE [LARGE SCALE GENOMIC DNA]</scope>
    <source>
        <strain>UMN026 / ExPEC</strain>
    </source>
</reference>
<feature type="chain" id="PRO_1000116207" description="Argininosuccinate lyase">
    <location>
        <begin position="1"/>
        <end position="457"/>
    </location>
</feature>
<proteinExistence type="inferred from homology"/>
<organism>
    <name type="scientific">Escherichia coli O17:K52:H18 (strain UMN026 / ExPEC)</name>
    <dbReference type="NCBI Taxonomy" id="585056"/>
    <lineage>
        <taxon>Bacteria</taxon>
        <taxon>Pseudomonadati</taxon>
        <taxon>Pseudomonadota</taxon>
        <taxon>Gammaproteobacteria</taxon>
        <taxon>Enterobacterales</taxon>
        <taxon>Enterobacteriaceae</taxon>
        <taxon>Escherichia</taxon>
    </lineage>
</organism>
<dbReference type="EC" id="4.3.2.1" evidence="1"/>
<dbReference type="EMBL" id="CU928163">
    <property type="protein sequence ID" value="CAR15617.1"/>
    <property type="molecule type" value="Genomic_DNA"/>
</dbReference>
<dbReference type="RefSeq" id="WP_001230087.1">
    <property type="nucleotide sequence ID" value="NC_011751.1"/>
</dbReference>
<dbReference type="RefSeq" id="YP_002415106.1">
    <property type="nucleotide sequence ID" value="NC_011751.1"/>
</dbReference>
<dbReference type="SMR" id="B7NFR0"/>
<dbReference type="STRING" id="585056.ECUMN_4491"/>
<dbReference type="KEGG" id="eum:ECUMN_4491"/>
<dbReference type="PATRIC" id="fig|585056.7.peg.4661"/>
<dbReference type="HOGENOM" id="CLU_027272_2_3_6"/>
<dbReference type="UniPathway" id="UPA00068">
    <property type="reaction ID" value="UER00114"/>
</dbReference>
<dbReference type="Proteomes" id="UP000007097">
    <property type="component" value="Chromosome"/>
</dbReference>
<dbReference type="GO" id="GO:0005829">
    <property type="term" value="C:cytosol"/>
    <property type="evidence" value="ECO:0007669"/>
    <property type="project" value="TreeGrafter"/>
</dbReference>
<dbReference type="GO" id="GO:0004056">
    <property type="term" value="F:argininosuccinate lyase activity"/>
    <property type="evidence" value="ECO:0007669"/>
    <property type="project" value="UniProtKB-UniRule"/>
</dbReference>
<dbReference type="GO" id="GO:0042450">
    <property type="term" value="P:arginine biosynthetic process via ornithine"/>
    <property type="evidence" value="ECO:0007669"/>
    <property type="project" value="InterPro"/>
</dbReference>
<dbReference type="GO" id="GO:0006526">
    <property type="term" value="P:L-arginine biosynthetic process"/>
    <property type="evidence" value="ECO:0007669"/>
    <property type="project" value="UniProtKB-UniRule"/>
</dbReference>
<dbReference type="CDD" id="cd01359">
    <property type="entry name" value="Argininosuccinate_lyase"/>
    <property type="match status" value="1"/>
</dbReference>
<dbReference type="FunFam" id="1.10.275.10:FF:000004">
    <property type="entry name" value="Argininosuccinate lyase"/>
    <property type="match status" value="1"/>
</dbReference>
<dbReference type="FunFam" id="1.10.40.30:FF:000001">
    <property type="entry name" value="Argininosuccinate lyase"/>
    <property type="match status" value="1"/>
</dbReference>
<dbReference type="FunFam" id="1.20.200.10:FF:000006">
    <property type="entry name" value="Argininosuccinate lyase"/>
    <property type="match status" value="1"/>
</dbReference>
<dbReference type="Gene3D" id="1.10.40.30">
    <property type="entry name" value="Fumarase/aspartase (C-terminal domain)"/>
    <property type="match status" value="1"/>
</dbReference>
<dbReference type="Gene3D" id="1.20.200.10">
    <property type="entry name" value="Fumarase/aspartase (Central domain)"/>
    <property type="match status" value="1"/>
</dbReference>
<dbReference type="Gene3D" id="1.10.275.10">
    <property type="entry name" value="Fumarase/aspartase (N-terminal domain)"/>
    <property type="match status" value="1"/>
</dbReference>
<dbReference type="HAMAP" id="MF_00006">
    <property type="entry name" value="Arg_succ_lyase"/>
    <property type="match status" value="1"/>
</dbReference>
<dbReference type="InterPro" id="IPR029419">
    <property type="entry name" value="Arg_succ_lyase_C"/>
</dbReference>
<dbReference type="InterPro" id="IPR009049">
    <property type="entry name" value="Argininosuccinate_lyase"/>
</dbReference>
<dbReference type="InterPro" id="IPR024083">
    <property type="entry name" value="Fumarase/histidase_N"/>
</dbReference>
<dbReference type="InterPro" id="IPR020557">
    <property type="entry name" value="Fumarate_lyase_CS"/>
</dbReference>
<dbReference type="InterPro" id="IPR000362">
    <property type="entry name" value="Fumarate_lyase_fam"/>
</dbReference>
<dbReference type="InterPro" id="IPR022761">
    <property type="entry name" value="Fumarate_lyase_N"/>
</dbReference>
<dbReference type="InterPro" id="IPR008948">
    <property type="entry name" value="L-Aspartase-like"/>
</dbReference>
<dbReference type="NCBIfam" id="TIGR00838">
    <property type="entry name" value="argH"/>
    <property type="match status" value="1"/>
</dbReference>
<dbReference type="NCBIfam" id="NF008964">
    <property type="entry name" value="PRK12308.1"/>
    <property type="match status" value="1"/>
</dbReference>
<dbReference type="PANTHER" id="PTHR43814">
    <property type="entry name" value="ARGININOSUCCINATE LYASE"/>
    <property type="match status" value="1"/>
</dbReference>
<dbReference type="PANTHER" id="PTHR43814:SF1">
    <property type="entry name" value="ARGININOSUCCINATE LYASE"/>
    <property type="match status" value="1"/>
</dbReference>
<dbReference type="Pfam" id="PF14698">
    <property type="entry name" value="ASL_C2"/>
    <property type="match status" value="1"/>
</dbReference>
<dbReference type="Pfam" id="PF00206">
    <property type="entry name" value="Lyase_1"/>
    <property type="match status" value="1"/>
</dbReference>
<dbReference type="PRINTS" id="PR00145">
    <property type="entry name" value="ARGSUCLYASE"/>
</dbReference>
<dbReference type="PRINTS" id="PR00149">
    <property type="entry name" value="FUMRATELYASE"/>
</dbReference>
<dbReference type="SUPFAM" id="SSF48557">
    <property type="entry name" value="L-aspartase-like"/>
    <property type="match status" value="1"/>
</dbReference>
<dbReference type="PROSITE" id="PS00163">
    <property type="entry name" value="FUMARATE_LYASES"/>
    <property type="match status" value="1"/>
</dbReference>
<protein>
    <recommendedName>
        <fullName evidence="1">Argininosuccinate lyase</fullName>
        <shortName evidence="1">ASAL</shortName>
        <ecNumber evidence="1">4.3.2.1</ecNumber>
    </recommendedName>
    <alternativeName>
        <fullName evidence="1">Arginosuccinase</fullName>
    </alternativeName>
</protein>
<sequence>MALWGGRFTQAADQRFKQFNDSLRFDYRLAEQDIVGSVAWSKALVTVGVLTAEEQAQLEEALNVLLEDVRARPQQILESDAEDIHSWVEGKLIDKVGQLGKKLHTGRSRNDQVATDLKLWCKDTVSELLTANRQLQSALVETAQNNQDAVMPGYTHLQRAQPVTFAHWCLAYVEMLARDESRLQDALKRLDVSPLGCGALAGTAYEIDREQLAGWLGFASATRNSLDSVSDRDHVLELLSAAAIGMVHLSRFAEDLIFFNTGEAGFVELSDRVTSGSSLMPQKKNPDALELIRGKCGRVQGALTGMMMTLKGLPLAYNKDMQEDKEGLFDALDTWLDCLHMAALVLDGIQVKRPRCQEAAQQGYANATELADYLVAKGVPFREAHHIVGEAVVEAIRQGKPLEDLPLSELQKFSQVIDEDVYPILSLQSCLDKRAAKGGVSPQQVAQAIAFAQARLG</sequence>
<name>ARLY_ECOLU</name>
<gene>
    <name evidence="1" type="primary">argH</name>
    <name type="ordered locus">ECUMN_4491</name>
</gene>
<evidence type="ECO:0000255" key="1">
    <source>
        <dbReference type="HAMAP-Rule" id="MF_00006"/>
    </source>
</evidence>
<accession>B7NFR0</accession>
<keyword id="KW-0028">Amino-acid biosynthesis</keyword>
<keyword id="KW-0055">Arginine biosynthesis</keyword>
<keyword id="KW-0963">Cytoplasm</keyword>
<keyword id="KW-0456">Lyase</keyword>
<comment type="catalytic activity">
    <reaction evidence="1">
        <text>2-(N(omega)-L-arginino)succinate = fumarate + L-arginine</text>
        <dbReference type="Rhea" id="RHEA:24020"/>
        <dbReference type="ChEBI" id="CHEBI:29806"/>
        <dbReference type="ChEBI" id="CHEBI:32682"/>
        <dbReference type="ChEBI" id="CHEBI:57472"/>
        <dbReference type="EC" id="4.3.2.1"/>
    </reaction>
</comment>
<comment type="pathway">
    <text evidence="1">Amino-acid biosynthesis; L-arginine biosynthesis; L-arginine from L-ornithine and carbamoyl phosphate: step 3/3.</text>
</comment>
<comment type="subcellular location">
    <subcellularLocation>
        <location evidence="1">Cytoplasm</location>
    </subcellularLocation>
</comment>
<comment type="similarity">
    <text evidence="1">Belongs to the lyase 1 family. Argininosuccinate lyase subfamily.</text>
</comment>